<accession>Q12ZX1</accession>
<sequence length="628" mass="68759">MTTTDTASETKPFQAEVAELLNLMVHSVYSETDIFLRELISNASDALDKLRYESIATPALMEAGGAPKIQIVPRKAPDTLTVIDNGIGMNRQELIDNLGTIAKSGTKSFLTKLTEAKDGAGLIGQFGVGFYAAFMVADNIVVTSRRAGSGEVWTWSSSGGAGFEIAPASEEAAARVVRGTEIVLHLKPDAAKYLEAYQIERIVSEYSDNIQFPIELVPEEGEPRQINSASALWQRSKSELTEEDYNQAYKQIAGAFDEPAMTLHYRAEGRQSYAVLLFAPATKPFDLFEPERKGRIKLYVRRVFITADADLLPPYLRFLRGVIDSEDLPLNLSREMLQNNPQLAQIRKAVTGKVIGELESLADKKPEDFARIWEAFGPVLKEGLYEDYERREKLLALARFTTTAGEKRTLSQYVEAMKENQTEIYYLVGDSIERLKSNPKLESATARGIEVLLLTDGVDAFWTSGQLDFGGKPLKSLSQGDVNFDLIPKLDADKPDDKPDETKADEATVIAVIKDALGERVSDVKASQRLTSSASCLVAGGFGPDRELEKMLARANKGAATKPVLEINLGHPLVAALADAKADKADATDLSFLLLEQAQILDGELPEDPAAFAGRLNRLVLRGLVAHG</sequence>
<keyword id="KW-0067">ATP-binding</keyword>
<keyword id="KW-0143">Chaperone</keyword>
<keyword id="KW-0963">Cytoplasm</keyword>
<keyword id="KW-0547">Nucleotide-binding</keyword>
<keyword id="KW-0346">Stress response</keyword>
<evidence type="ECO:0000255" key="1">
    <source>
        <dbReference type="HAMAP-Rule" id="MF_00505"/>
    </source>
</evidence>
<name>HTPG_RHOPS</name>
<proteinExistence type="inferred from homology"/>
<organism>
    <name type="scientific">Rhodopseudomonas palustris (strain BisB5)</name>
    <dbReference type="NCBI Taxonomy" id="316057"/>
    <lineage>
        <taxon>Bacteria</taxon>
        <taxon>Pseudomonadati</taxon>
        <taxon>Pseudomonadota</taxon>
        <taxon>Alphaproteobacteria</taxon>
        <taxon>Hyphomicrobiales</taxon>
        <taxon>Nitrobacteraceae</taxon>
        <taxon>Rhodopseudomonas</taxon>
    </lineage>
</organism>
<protein>
    <recommendedName>
        <fullName evidence="1">Chaperone protein HtpG</fullName>
    </recommendedName>
    <alternativeName>
        <fullName evidence="1">Heat shock protein HtpG</fullName>
    </alternativeName>
    <alternativeName>
        <fullName evidence="1">High temperature protein G</fullName>
    </alternativeName>
</protein>
<feature type="chain" id="PRO_1000014944" description="Chaperone protein HtpG">
    <location>
        <begin position="1"/>
        <end position="628"/>
    </location>
</feature>
<feature type="region of interest" description="A; substrate-binding" evidence="1">
    <location>
        <begin position="1"/>
        <end position="334"/>
    </location>
</feature>
<feature type="region of interest" description="B" evidence="1">
    <location>
        <begin position="335"/>
        <end position="550"/>
    </location>
</feature>
<feature type="region of interest" description="C" evidence="1">
    <location>
        <begin position="551"/>
        <end position="628"/>
    </location>
</feature>
<comment type="function">
    <text evidence="1">Molecular chaperone. Has ATPase activity.</text>
</comment>
<comment type="subunit">
    <text evidence="1">Homodimer.</text>
</comment>
<comment type="subcellular location">
    <subcellularLocation>
        <location evidence="1">Cytoplasm</location>
    </subcellularLocation>
</comment>
<comment type="similarity">
    <text evidence="1">Belongs to the heat shock protein 90 family.</text>
</comment>
<gene>
    <name evidence="1" type="primary">htpG</name>
    <name type="ordered locus">RPD_4402</name>
</gene>
<dbReference type="EMBL" id="CP000283">
    <property type="protein sequence ID" value="ABE41618.1"/>
    <property type="molecule type" value="Genomic_DNA"/>
</dbReference>
<dbReference type="SMR" id="Q12ZX1"/>
<dbReference type="STRING" id="316057.RPD_4402"/>
<dbReference type="KEGG" id="rpd:RPD_4402"/>
<dbReference type="eggNOG" id="COG0326">
    <property type="taxonomic scope" value="Bacteria"/>
</dbReference>
<dbReference type="HOGENOM" id="CLU_006684_3_0_5"/>
<dbReference type="BioCyc" id="RPAL316057:RPD_RS22145-MONOMER"/>
<dbReference type="Proteomes" id="UP000001818">
    <property type="component" value="Chromosome"/>
</dbReference>
<dbReference type="GO" id="GO:0005737">
    <property type="term" value="C:cytoplasm"/>
    <property type="evidence" value="ECO:0007669"/>
    <property type="project" value="UniProtKB-SubCell"/>
</dbReference>
<dbReference type="GO" id="GO:0005524">
    <property type="term" value="F:ATP binding"/>
    <property type="evidence" value="ECO:0007669"/>
    <property type="project" value="UniProtKB-UniRule"/>
</dbReference>
<dbReference type="GO" id="GO:0016887">
    <property type="term" value="F:ATP hydrolysis activity"/>
    <property type="evidence" value="ECO:0007669"/>
    <property type="project" value="InterPro"/>
</dbReference>
<dbReference type="GO" id="GO:0140662">
    <property type="term" value="F:ATP-dependent protein folding chaperone"/>
    <property type="evidence" value="ECO:0007669"/>
    <property type="project" value="InterPro"/>
</dbReference>
<dbReference type="GO" id="GO:0051082">
    <property type="term" value="F:unfolded protein binding"/>
    <property type="evidence" value="ECO:0007669"/>
    <property type="project" value="UniProtKB-UniRule"/>
</dbReference>
<dbReference type="CDD" id="cd16927">
    <property type="entry name" value="HATPase_Hsp90-like"/>
    <property type="match status" value="1"/>
</dbReference>
<dbReference type="FunFam" id="3.30.565.10:FF:000357">
    <property type="entry name" value="Heat shock protein HSP 90-beta"/>
    <property type="match status" value="1"/>
</dbReference>
<dbReference type="Gene3D" id="3.30.230.80">
    <property type="match status" value="1"/>
</dbReference>
<dbReference type="Gene3D" id="3.40.50.11260">
    <property type="match status" value="1"/>
</dbReference>
<dbReference type="Gene3D" id="1.20.120.790">
    <property type="entry name" value="Heat shock protein 90, C-terminal domain"/>
    <property type="match status" value="1"/>
</dbReference>
<dbReference type="Gene3D" id="3.30.565.10">
    <property type="entry name" value="Histidine kinase-like ATPase, C-terminal domain"/>
    <property type="match status" value="1"/>
</dbReference>
<dbReference type="HAMAP" id="MF_00505">
    <property type="entry name" value="HSP90"/>
    <property type="match status" value="1"/>
</dbReference>
<dbReference type="InterPro" id="IPR036890">
    <property type="entry name" value="HATPase_C_sf"/>
</dbReference>
<dbReference type="InterPro" id="IPR037196">
    <property type="entry name" value="HSP90_C"/>
</dbReference>
<dbReference type="InterPro" id="IPR001404">
    <property type="entry name" value="Hsp90_fam"/>
</dbReference>
<dbReference type="InterPro" id="IPR020575">
    <property type="entry name" value="Hsp90_N"/>
</dbReference>
<dbReference type="InterPro" id="IPR020568">
    <property type="entry name" value="Ribosomal_Su5_D2-typ_SF"/>
</dbReference>
<dbReference type="NCBIfam" id="NF003555">
    <property type="entry name" value="PRK05218.1"/>
    <property type="match status" value="1"/>
</dbReference>
<dbReference type="PANTHER" id="PTHR11528">
    <property type="entry name" value="HEAT SHOCK PROTEIN 90 FAMILY MEMBER"/>
    <property type="match status" value="1"/>
</dbReference>
<dbReference type="Pfam" id="PF13589">
    <property type="entry name" value="HATPase_c_3"/>
    <property type="match status" value="1"/>
</dbReference>
<dbReference type="Pfam" id="PF00183">
    <property type="entry name" value="HSP90"/>
    <property type="match status" value="1"/>
</dbReference>
<dbReference type="PIRSF" id="PIRSF002583">
    <property type="entry name" value="Hsp90"/>
    <property type="match status" value="1"/>
</dbReference>
<dbReference type="PRINTS" id="PR00775">
    <property type="entry name" value="HEATSHOCK90"/>
</dbReference>
<dbReference type="SMART" id="SM00387">
    <property type="entry name" value="HATPase_c"/>
    <property type="match status" value="1"/>
</dbReference>
<dbReference type="SUPFAM" id="SSF55874">
    <property type="entry name" value="ATPase domain of HSP90 chaperone/DNA topoisomerase II/histidine kinase"/>
    <property type="match status" value="1"/>
</dbReference>
<dbReference type="SUPFAM" id="SSF110942">
    <property type="entry name" value="HSP90 C-terminal domain"/>
    <property type="match status" value="1"/>
</dbReference>
<dbReference type="SUPFAM" id="SSF54211">
    <property type="entry name" value="Ribosomal protein S5 domain 2-like"/>
    <property type="match status" value="1"/>
</dbReference>
<reference key="1">
    <citation type="submission" date="2006-03" db="EMBL/GenBank/DDBJ databases">
        <title>Complete sequence of Rhodopseudomonas palustris BisB5.</title>
        <authorList>
            <consortium name="US DOE Joint Genome Institute"/>
            <person name="Copeland A."/>
            <person name="Lucas S."/>
            <person name="Lapidus A."/>
            <person name="Barry K."/>
            <person name="Detter J.C."/>
            <person name="Glavina del Rio T."/>
            <person name="Hammon N."/>
            <person name="Israni S."/>
            <person name="Dalin E."/>
            <person name="Tice H."/>
            <person name="Pitluck S."/>
            <person name="Chain P."/>
            <person name="Malfatti S."/>
            <person name="Shin M."/>
            <person name="Vergez L."/>
            <person name="Schmutz J."/>
            <person name="Larimer F."/>
            <person name="Land M."/>
            <person name="Hauser L."/>
            <person name="Pelletier D.A."/>
            <person name="Kyrpides N."/>
            <person name="Lykidis A."/>
            <person name="Oda Y."/>
            <person name="Harwood C.S."/>
            <person name="Richardson P."/>
        </authorList>
    </citation>
    <scope>NUCLEOTIDE SEQUENCE [LARGE SCALE GENOMIC DNA]</scope>
    <source>
        <strain>BisB5</strain>
    </source>
</reference>